<reference key="1">
    <citation type="journal article" date="2003" name="Proc. Natl. Acad. Sci. U.S.A.">
        <title>The complete genome sequence of Mycobacterium bovis.</title>
        <authorList>
            <person name="Garnier T."/>
            <person name="Eiglmeier K."/>
            <person name="Camus J.-C."/>
            <person name="Medina N."/>
            <person name="Mansoor H."/>
            <person name="Pryor M."/>
            <person name="Duthoy S."/>
            <person name="Grondin S."/>
            <person name="Lacroix C."/>
            <person name="Monsempe C."/>
            <person name="Simon S."/>
            <person name="Harris B."/>
            <person name="Atkin R."/>
            <person name="Doggett J."/>
            <person name="Mayes R."/>
            <person name="Keating L."/>
            <person name="Wheeler P.R."/>
            <person name="Parkhill J."/>
            <person name="Barrell B.G."/>
            <person name="Cole S.T."/>
            <person name="Gordon S.V."/>
            <person name="Hewinson R.G."/>
        </authorList>
    </citation>
    <scope>NUCLEOTIDE SEQUENCE [LARGE SCALE GENOMIC DNA]</scope>
    <source>
        <strain>ATCC BAA-935 / AF2122/97</strain>
    </source>
</reference>
<reference key="2">
    <citation type="journal article" date="2017" name="Genome Announc.">
        <title>Updated reference genome sequence and annotation of Mycobacterium bovis AF2122/97.</title>
        <authorList>
            <person name="Malone K.M."/>
            <person name="Farrell D."/>
            <person name="Stuber T.P."/>
            <person name="Schubert O.T."/>
            <person name="Aebersold R."/>
            <person name="Robbe-Austerman S."/>
            <person name="Gordon S.V."/>
        </authorList>
    </citation>
    <scope>NUCLEOTIDE SEQUENCE [LARGE SCALE GENOMIC DNA]</scope>
    <scope>GENOME REANNOTATION</scope>
    <source>
        <strain>ATCC BAA-935 / AF2122/97</strain>
    </source>
</reference>
<accession>Q7U178</accession>
<accession>A0A1R3XWW6</accession>
<accession>X2BG93</accession>
<feature type="chain" id="PRO_0000356915" description="Peroxynitrite isomerase 2">
    <location>
        <begin position="1"/>
        <end position="226"/>
    </location>
</feature>
<feature type="short sequence motif" description="GXWXGXG" evidence="1">
    <location>
        <begin position="73"/>
        <end position="79"/>
    </location>
</feature>
<feature type="binding site" evidence="1">
    <location>
        <position position="189"/>
    </location>
    <ligand>
        <name>heme b</name>
        <dbReference type="ChEBI" id="CHEBI:60344"/>
    </ligand>
</feature>
<feature type="binding site" description="axial binding residue" evidence="1">
    <location>
        <position position="216"/>
    </location>
    <ligand>
        <name>heme b</name>
        <dbReference type="ChEBI" id="CHEBI:60344"/>
    </ligand>
    <ligandPart>
        <name>Fe</name>
        <dbReference type="ChEBI" id="CHEBI:18248"/>
    </ligandPart>
</feature>
<proteinExistence type="inferred from homology"/>
<protein>
    <recommendedName>
        <fullName>Peroxynitrite isomerase 2</fullName>
        <ecNumber evidence="1">5.99.-.-</ecNumber>
    </recommendedName>
    <alternativeName>
        <fullName>Ferric nitrobindin</fullName>
        <shortName>Nb(III)</shortName>
    </alternativeName>
</protein>
<evidence type="ECO:0000255" key="1">
    <source>
        <dbReference type="HAMAP-Rule" id="MF_01297"/>
    </source>
</evidence>
<gene>
    <name type="ordered locus">BQ2027_MB0836C</name>
</gene>
<keyword id="KW-0349">Heme</keyword>
<keyword id="KW-0408">Iron</keyword>
<keyword id="KW-0413">Isomerase</keyword>
<keyword id="KW-0479">Metal-binding</keyword>
<keyword id="KW-1185">Reference proteome</keyword>
<name>NB2_MYCBO</name>
<dbReference type="EC" id="5.99.-.-" evidence="1"/>
<dbReference type="EMBL" id="LT708304">
    <property type="protein sequence ID" value="SIT99435.1"/>
    <property type="molecule type" value="Genomic_DNA"/>
</dbReference>
<dbReference type="RefSeq" id="NP_854494.1">
    <property type="nucleotide sequence ID" value="NC_002945.3"/>
</dbReference>
<dbReference type="RefSeq" id="WP_003898596.1">
    <property type="nucleotide sequence ID" value="NC_002945.4"/>
</dbReference>
<dbReference type="SMR" id="Q7U178"/>
<dbReference type="KEGG" id="mbo:BQ2027_MB0836C"/>
<dbReference type="PATRIC" id="fig|233413.5.peg.908"/>
<dbReference type="Proteomes" id="UP000001419">
    <property type="component" value="Chromosome"/>
</dbReference>
<dbReference type="GO" id="GO:0020037">
    <property type="term" value="F:heme binding"/>
    <property type="evidence" value="ECO:0007669"/>
    <property type="project" value="UniProtKB-UniRule"/>
</dbReference>
<dbReference type="GO" id="GO:0046872">
    <property type="term" value="F:metal ion binding"/>
    <property type="evidence" value="ECO:0007669"/>
    <property type="project" value="UniProtKB-KW"/>
</dbReference>
<dbReference type="GO" id="GO:0062213">
    <property type="term" value="F:peroxynitrite isomerase activity"/>
    <property type="evidence" value="ECO:0007669"/>
    <property type="project" value="UniProtKB-UniRule"/>
</dbReference>
<dbReference type="CDD" id="cd07828">
    <property type="entry name" value="lipocalin_heme-bd-THAP4-like"/>
    <property type="match status" value="1"/>
</dbReference>
<dbReference type="FunFam" id="2.40.128.20:FF:000025">
    <property type="entry name" value="UPF0678 fatty acid-binding protein-like protein Rv0813c"/>
    <property type="match status" value="1"/>
</dbReference>
<dbReference type="Gene3D" id="2.40.128.20">
    <property type="match status" value="1"/>
</dbReference>
<dbReference type="HAMAP" id="MF_01297">
    <property type="entry name" value="nitrobindin"/>
    <property type="match status" value="1"/>
</dbReference>
<dbReference type="InterPro" id="IPR012674">
    <property type="entry name" value="Calycin"/>
</dbReference>
<dbReference type="InterPro" id="IPR022939">
    <property type="entry name" value="Nb(III)_bact/plant"/>
</dbReference>
<dbReference type="InterPro" id="IPR045165">
    <property type="entry name" value="Nitrobindin"/>
</dbReference>
<dbReference type="InterPro" id="IPR014878">
    <property type="entry name" value="THAP4-like_heme-bd"/>
</dbReference>
<dbReference type="PANTHER" id="PTHR15854:SF4">
    <property type="entry name" value="PEROXYNITRITE ISOMERASE THAP4"/>
    <property type="match status" value="1"/>
</dbReference>
<dbReference type="PANTHER" id="PTHR15854">
    <property type="entry name" value="THAP4 PROTEIN"/>
    <property type="match status" value="1"/>
</dbReference>
<dbReference type="Pfam" id="PF08768">
    <property type="entry name" value="THAP4_heme-bd"/>
    <property type="match status" value="1"/>
</dbReference>
<dbReference type="SUPFAM" id="SSF50814">
    <property type="entry name" value="Lipocalins"/>
    <property type="match status" value="1"/>
</dbReference>
<organism>
    <name type="scientific">Mycobacterium bovis (strain ATCC BAA-935 / AF2122/97)</name>
    <dbReference type="NCBI Taxonomy" id="233413"/>
    <lineage>
        <taxon>Bacteria</taxon>
        <taxon>Bacillati</taxon>
        <taxon>Actinomycetota</taxon>
        <taxon>Actinomycetes</taxon>
        <taxon>Mycobacteriales</taxon>
        <taxon>Mycobacteriaceae</taxon>
        <taxon>Mycobacterium</taxon>
        <taxon>Mycobacterium tuberculosis complex</taxon>
    </lineage>
</organism>
<comment type="function">
    <text evidence="1">Heme-binding protein able to scavenge peroxynitrite and to protect free L-tyrosine against peroxynitrite-mediated nitration, by acting as a peroxynitrite isomerase that converts peroxynitrite to nitrate. Therefore, this protein likely plays a role in peroxynitrite sensing and in the detoxification of reactive nitrogen and oxygen species (RNS and ROS, respectively). Is able to bind nitric oxide (NO) in vitro, but may act as a sensor of peroxynitrite levels in vivo.</text>
</comment>
<comment type="catalytic activity">
    <reaction evidence="1">
        <text>peroxynitrite = nitrate</text>
        <dbReference type="Rhea" id="RHEA:63116"/>
        <dbReference type="ChEBI" id="CHEBI:17632"/>
        <dbReference type="ChEBI" id="CHEBI:25941"/>
    </reaction>
    <physiologicalReaction direction="left-to-right" evidence="1">
        <dbReference type="Rhea" id="RHEA:63117"/>
    </physiologicalReaction>
</comment>
<comment type="cofactor">
    <cofactor evidence="1">
        <name>heme b</name>
        <dbReference type="ChEBI" id="CHEBI:60344"/>
    </cofactor>
    <text evidence="1">Binds 1 heme b group per subunit, that coordinates a highly solvent-exposed Fe(III) atom.</text>
</comment>
<comment type="pathway">
    <text evidence="1">Nitrogen metabolism.</text>
</comment>
<comment type="subunit">
    <text evidence="1">Homodimer.</text>
</comment>
<comment type="domain">
    <text evidence="1">Forms a 10-stranded antiparallel beta-barrel structure able to accommodate a hydrophobic ligand in its interior. In fact, this fold hosts the heme group, which is located in a wide surface cleft.</text>
</comment>
<comment type="similarity">
    <text evidence="1">Belongs to the nitrobindin family.</text>
</comment>
<sequence>MSSGAGSDATGAGGVHAAGSGDRAVAAAVERAKATAARNIPAFDDLPVPADTANLREGADLNNALLALLPLVGVWRGEGEGRGPDGDYRFGQQIVVSHDGGDYLNWESRSWRLTATGDYQEPGLREAGFWRFVADPYDPSESQAIELLLAHSAGYVELFYGRPRTQSSWELVTDALARSRSGVLVGGAKRLYGIVEGGDLAYVEERVDADGGLVPHLSARLSRFVG</sequence>